<reference key="1">
    <citation type="submission" date="2007-06" db="EMBL/GenBank/DDBJ databases">
        <authorList>
            <consortium name="NIH - Mammalian Gene Collection (MGC) project"/>
        </authorList>
    </citation>
    <scope>NUCLEOTIDE SEQUENCE [LARGE SCALE MRNA]</scope>
    <source>
        <strain>Crossbred X Angus</strain>
        <strain>Hereford</strain>
        <tissue>Ileum</tissue>
        <tissue>Testis</tissue>
    </source>
</reference>
<evidence type="ECO:0000250" key="1">
    <source>
        <dbReference type="UniProtKB" id="P62829"/>
    </source>
</evidence>
<evidence type="ECO:0000305" key="2"/>
<protein>
    <recommendedName>
        <fullName evidence="2">Large ribosomal subunit protein uL14</fullName>
    </recommendedName>
    <alternativeName>
        <fullName>60S ribosomal protein L23</fullName>
    </alternativeName>
</protein>
<gene>
    <name type="primary">RPL23</name>
</gene>
<feature type="chain" id="PRO_0000240138" description="Large ribosomal subunit protein uL14">
    <location>
        <begin position="1"/>
        <end position="140"/>
    </location>
</feature>
<feature type="modified residue" description="Phosphoserine" evidence="1">
    <location>
        <position position="17"/>
    </location>
</feature>
<feature type="modified residue" description="Phosphotyrosine" evidence="1">
    <location>
        <position position="38"/>
    </location>
</feature>
<feature type="sequence conflict" description="In Ref. 1; AAI02557." evidence="2" ref="1">
    <original>R</original>
    <variation>L</variation>
    <location>
        <position position="4"/>
    </location>
</feature>
<name>RL23_BOVIN</name>
<sequence>MSKRGRGGSSGAKFRISLGLPVGAVINCADNTGAKNLYIISVKGIKGRLNRLPAAGVGDMVMATVKKGKPELRKKVHPAVVIRQRKSYRRKDGVFLYFEDNAGVIVNNKGEMKGSAITGPVAKECADLWPRIASNAGSIA</sequence>
<keyword id="KW-0963">Cytoplasm</keyword>
<keyword id="KW-0597">Phosphoprotein</keyword>
<keyword id="KW-1185">Reference proteome</keyword>
<keyword id="KW-0687">Ribonucleoprotein</keyword>
<keyword id="KW-0689">Ribosomal protein</keyword>
<dbReference type="EMBL" id="BC102556">
    <property type="protein sequence ID" value="AAI02557.1"/>
    <property type="molecule type" value="mRNA"/>
</dbReference>
<dbReference type="EMBL" id="BC148014">
    <property type="protein sequence ID" value="AAI48015.1"/>
    <property type="molecule type" value="mRNA"/>
</dbReference>
<dbReference type="RefSeq" id="NP_001030186.1">
    <property type="nucleotide sequence ID" value="NM_001035014.2"/>
</dbReference>
<dbReference type="SMR" id="Q3T057"/>
<dbReference type="FunCoup" id="Q3T057">
    <property type="interactions" value="3294"/>
</dbReference>
<dbReference type="STRING" id="9913.ENSBTAP00000004190"/>
<dbReference type="PaxDb" id="9913-ENSBTAP00000004190"/>
<dbReference type="PeptideAtlas" id="Q3T057"/>
<dbReference type="Ensembl" id="ENSBTAT00000004190.6">
    <property type="protein sequence ID" value="ENSBTAP00000004190.4"/>
    <property type="gene ID" value="ENSBTAG00000003229.6"/>
</dbReference>
<dbReference type="GeneID" id="504876"/>
<dbReference type="KEGG" id="bta:504876"/>
<dbReference type="CTD" id="9349"/>
<dbReference type="VEuPathDB" id="HostDB:ENSBTAG00000003229"/>
<dbReference type="VGNC" id="VGNC:55867">
    <property type="gene designation" value="RPL23"/>
</dbReference>
<dbReference type="eggNOG" id="KOG0901">
    <property type="taxonomic scope" value="Eukaryota"/>
</dbReference>
<dbReference type="GeneTree" id="ENSGT00390000004690"/>
<dbReference type="HOGENOM" id="CLU_095071_3_0_1"/>
<dbReference type="InParanoid" id="Q3T057"/>
<dbReference type="OMA" id="MIQMQTR"/>
<dbReference type="OrthoDB" id="407959at2759"/>
<dbReference type="TreeFam" id="TF300913"/>
<dbReference type="Reactome" id="R-BTA-156827">
    <property type="pathway name" value="L13a-mediated translational silencing of Ceruloplasmin expression"/>
</dbReference>
<dbReference type="Reactome" id="R-BTA-1799339">
    <property type="pathway name" value="SRP-dependent cotranslational protein targeting to membrane"/>
</dbReference>
<dbReference type="Reactome" id="R-BTA-6791226">
    <property type="pathway name" value="Major pathway of rRNA processing in the nucleolus and cytosol"/>
</dbReference>
<dbReference type="Reactome" id="R-BTA-72689">
    <property type="pathway name" value="Formation of a pool of free 40S subunits"/>
</dbReference>
<dbReference type="Reactome" id="R-BTA-72706">
    <property type="pathway name" value="GTP hydrolysis and joining of the 60S ribosomal subunit"/>
</dbReference>
<dbReference type="Reactome" id="R-BTA-975956">
    <property type="pathway name" value="Nonsense Mediated Decay (NMD) independent of the Exon Junction Complex (EJC)"/>
</dbReference>
<dbReference type="Reactome" id="R-BTA-975957">
    <property type="pathway name" value="Nonsense Mediated Decay (NMD) enhanced by the Exon Junction Complex (EJC)"/>
</dbReference>
<dbReference type="CD-CODE" id="D7FE2080">
    <property type="entry name" value="Nucleolus"/>
</dbReference>
<dbReference type="Proteomes" id="UP000009136">
    <property type="component" value="Chromosome 19"/>
</dbReference>
<dbReference type="Bgee" id="ENSBTAG00000003229">
    <property type="expression patterns" value="Expressed in theca cell and 105 other cell types or tissues"/>
</dbReference>
<dbReference type="GO" id="GO:0022625">
    <property type="term" value="C:cytosolic large ribosomal subunit"/>
    <property type="evidence" value="ECO:0000318"/>
    <property type="project" value="GO_Central"/>
</dbReference>
<dbReference type="GO" id="GO:0005730">
    <property type="term" value="C:nucleolus"/>
    <property type="evidence" value="ECO:0007669"/>
    <property type="project" value="Ensembl"/>
</dbReference>
<dbReference type="GO" id="GO:0005654">
    <property type="term" value="C:nucleoplasm"/>
    <property type="evidence" value="ECO:0007669"/>
    <property type="project" value="Ensembl"/>
</dbReference>
<dbReference type="GO" id="GO:0045202">
    <property type="term" value="C:synapse"/>
    <property type="evidence" value="ECO:0007669"/>
    <property type="project" value="Ensembl"/>
</dbReference>
<dbReference type="GO" id="GO:0070180">
    <property type="term" value="F:large ribosomal subunit rRNA binding"/>
    <property type="evidence" value="ECO:0000318"/>
    <property type="project" value="GO_Central"/>
</dbReference>
<dbReference type="GO" id="GO:0003735">
    <property type="term" value="F:structural constituent of ribosome"/>
    <property type="evidence" value="ECO:0000318"/>
    <property type="project" value="GO_Central"/>
</dbReference>
<dbReference type="GO" id="GO:0001223">
    <property type="term" value="F:transcription coactivator binding"/>
    <property type="evidence" value="ECO:0007669"/>
    <property type="project" value="Ensembl"/>
</dbReference>
<dbReference type="GO" id="GO:1990948">
    <property type="term" value="F:ubiquitin ligase inhibitor activity"/>
    <property type="evidence" value="ECO:0007669"/>
    <property type="project" value="Ensembl"/>
</dbReference>
<dbReference type="GO" id="GO:0031625">
    <property type="term" value="F:ubiquitin protein ligase binding"/>
    <property type="evidence" value="ECO:0007669"/>
    <property type="project" value="Ensembl"/>
</dbReference>
<dbReference type="GO" id="GO:0072717">
    <property type="term" value="P:cellular response to actinomycin D"/>
    <property type="evidence" value="ECO:0007669"/>
    <property type="project" value="Ensembl"/>
</dbReference>
<dbReference type="GO" id="GO:0070314">
    <property type="term" value="P:G1 to G0 transition"/>
    <property type="evidence" value="ECO:0007669"/>
    <property type="project" value="Ensembl"/>
</dbReference>
<dbReference type="GO" id="GO:0000122">
    <property type="term" value="P:negative regulation of transcription by RNA polymerase II"/>
    <property type="evidence" value="ECO:0007669"/>
    <property type="project" value="Ensembl"/>
</dbReference>
<dbReference type="GO" id="GO:2000059">
    <property type="term" value="P:negative regulation of ubiquitin-dependent protein catabolic process"/>
    <property type="evidence" value="ECO:0007669"/>
    <property type="project" value="Ensembl"/>
</dbReference>
<dbReference type="GO" id="GO:0008284">
    <property type="term" value="P:positive regulation of cell population proliferation"/>
    <property type="evidence" value="ECO:0007669"/>
    <property type="project" value="Ensembl"/>
</dbReference>
<dbReference type="GO" id="GO:0010628">
    <property type="term" value="P:positive regulation of gene expression"/>
    <property type="evidence" value="ECO:0007669"/>
    <property type="project" value="Ensembl"/>
</dbReference>
<dbReference type="GO" id="GO:1901798">
    <property type="term" value="P:positive regulation of signal transduction by p53 class mediator"/>
    <property type="evidence" value="ECO:0007669"/>
    <property type="project" value="Ensembl"/>
</dbReference>
<dbReference type="GO" id="GO:0050821">
    <property type="term" value="P:protein stabilization"/>
    <property type="evidence" value="ECO:0007669"/>
    <property type="project" value="Ensembl"/>
</dbReference>
<dbReference type="GO" id="GO:0032986">
    <property type="term" value="P:protein-DNA complex disassembly"/>
    <property type="evidence" value="ECO:0007669"/>
    <property type="project" value="Ensembl"/>
</dbReference>
<dbReference type="GO" id="GO:1903450">
    <property type="term" value="P:regulation of G1 to G0 transition"/>
    <property type="evidence" value="ECO:0007669"/>
    <property type="project" value="Ensembl"/>
</dbReference>
<dbReference type="GO" id="GO:0006412">
    <property type="term" value="P:translation"/>
    <property type="evidence" value="ECO:0007669"/>
    <property type="project" value="InterPro"/>
</dbReference>
<dbReference type="CDD" id="cd00337">
    <property type="entry name" value="Ribosomal_uL14"/>
    <property type="match status" value="1"/>
</dbReference>
<dbReference type="FunFam" id="2.40.150.20:FF:000003">
    <property type="entry name" value="60S ribosomal protein L23"/>
    <property type="match status" value="1"/>
</dbReference>
<dbReference type="Gene3D" id="2.40.150.20">
    <property type="entry name" value="Ribosomal protein L14"/>
    <property type="match status" value="1"/>
</dbReference>
<dbReference type="HAMAP" id="MF_01367">
    <property type="entry name" value="Ribosomal_uL14"/>
    <property type="match status" value="1"/>
</dbReference>
<dbReference type="InterPro" id="IPR000218">
    <property type="entry name" value="Ribosomal_uL14"/>
</dbReference>
<dbReference type="InterPro" id="IPR019972">
    <property type="entry name" value="Ribosomal_uL14_CS"/>
</dbReference>
<dbReference type="InterPro" id="IPR036853">
    <property type="entry name" value="Ribosomal_uL14_sf"/>
</dbReference>
<dbReference type="NCBIfam" id="NF006344">
    <property type="entry name" value="PRK08571.1"/>
    <property type="match status" value="1"/>
</dbReference>
<dbReference type="PANTHER" id="PTHR11761">
    <property type="entry name" value="50S/60S RIBOSOMAL PROTEIN L14/L23"/>
    <property type="match status" value="1"/>
</dbReference>
<dbReference type="PANTHER" id="PTHR11761:SF8">
    <property type="entry name" value="LARGE RIBOSOMAL SUBUNIT PROTEIN UL14"/>
    <property type="match status" value="1"/>
</dbReference>
<dbReference type="Pfam" id="PF00238">
    <property type="entry name" value="Ribosomal_L14"/>
    <property type="match status" value="1"/>
</dbReference>
<dbReference type="SMART" id="SM01374">
    <property type="entry name" value="Ribosomal_L14"/>
    <property type="match status" value="1"/>
</dbReference>
<dbReference type="SUPFAM" id="SSF50193">
    <property type="entry name" value="Ribosomal protein L14"/>
    <property type="match status" value="1"/>
</dbReference>
<dbReference type="PROSITE" id="PS00049">
    <property type="entry name" value="RIBOSOMAL_L14"/>
    <property type="match status" value="1"/>
</dbReference>
<comment type="function">
    <text evidence="1">Component of the large ribosomal subunit. The ribosome is a large ribonucleoprotein complex responsible for the synthesis of proteins in the cell.</text>
</comment>
<comment type="subunit">
    <text evidence="1">Component of the large ribosomal subunit.</text>
</comment>
<comment type="subcellular location">
    <subcellularLocation>
        <location evidence="1">Cytoplasm</location>
    </subcellularLocation>
</comment>
<comment type="similarity">
    <text evidence="2">Belongs to the universal ribosomal protein uL14 family.</text>
</comment>
<proteinExistence type="evidence at transcript level"/>
<accession>Q3T057</accession>
<accession>A6QLM2</accession>
<organism>
    <name type="scientific">Bos taurus</name>
    <name type="common">Bovine</name>
    <dbReference type="NCBI Taxonomy" id="9913"/>
    <lineage>
        <taxon>Eukaryota</taxon>
        <taxon>Metazoa</taxon>
        <taxon>Chordata</taxon>
        <taxon>Craniata</taxon>
        <taxon>Vertebrata</taxon>
        <taxon>Euteleostomi</taxon>
        <taxon>Mammalia</taxon>
        <taxon>Eutheria</taxon>
        <taxon>Laurasiatheria</taxon>
        <taxon>Artiodactyla</taxon>
        <taxon>Ruminantia</taxon>
        <taxon>Pecora</taxon>
        <taxon>Bovidae</taxon>
        <taxon>Bovinae</taxon>
        <taxon>Bos</taxon>
    </lineage>
</organism>